<protein>
    <recommendedName>
        <fullName evidence="1">Probable alanine--tRNA ligase, chloroplastic/mitochondrial</fullName>
        <ecNumber evidence="1">6.1.1.7</ecNumber>
    </recommendedName>
    <alternativeName>
        <fullName evidence="1">Alanyl-tRNA synthetase</fullName>
        <shortName evidence="1">AlaRS</shortName>
    </alternativeName>
</protein>
<comment type="function">
    <text evidence="1">Catalyzes the attachment of alanine to tRNA(Ala) in a two-step reaction: alanine is first activated by ATP to form Ala-AMP and then transferred to the acceptor end of tRNA(Ala). Also edits incorrectly charged tRNA(Ala) via its editing domain.</text>
</comment>
<comment type="catalytic activity">
    <reaction evidence="1">
        <text>tRNA(Ala) + L-alanine + ATP = L-alanyl-tRNA(Ala) + AMP + diphosphate</text>
        <dbReference type="Rhea" id="RHEA:12540"/>
        <dbReference type="Rhea" id="RHEA-COMP:9657"/>
        <dbReference type="Rhea" id="RHEA-COMP:9923"/>
        <dbReference type="ChEBI" id="CHEBI:30616"/>
        <dbReference type="ChEBI" id="CHEBI:33019"/>
        <dbReference type="ChEBI" id="CHEBI:57972"/>
        <dbReference type="ChEBI" id="CHEBI:78442"/>
        <dbReference type="ChEBI" id="CHEBI:78497"/>
        <dbReference type="ChEBI" id="CHEBI:456215"/>
        <dbReference type="EC" id="6.1.1.7"/>
    </reaction>
</comment>
<comment type="cofactor">
    <cofactor evidence="1">
        <name>Zn(2+)</name>
        <dbReference type="ChEBI" id="CHEBI:29105"/>
    </cofactor>
    <text evidence="1">Binds 1 zinc ion per subunit.</text>
</comment>
<comment type="subunit">
    <text evidence="1">Monomer.</text>
</comment>
<comment type="subcellular location">
    <subcellularLocation>
        <location evidence="1">Plastid</location>
        <location evidence="1">Chloroplast</location>
    </subcellularLocation>
    <subcellularLocation>
        <location evidence="1">Mitochondrion</location>
    </subcellularLocation>
</comment>
<comment type="domain">
    <text evidence="1">Consists of three domains; the N-terminal catalytic domain, the editing domain and the C-terminal C-Ala domain. The editing domain removes incorrectly charged amino acids, while the C-Ala domain, along with tRNA(Ala), serves as a bridge to cooperatively bring together the editing and aminoacylation centers thus stimulating deacylation of misacylated tRNAs.</text>
</comment>
<comment type="similarity">
    <text evidence="1">Belongs to the class-II aminoacyl-tRNA synthetase family.</text>
</comment>
<organism>
    <name type="scientific">Ostreococcus tauri</name>
    <dbReference type="NCBI Taxonomy" id="70448"/>
    <lineage>
        <taxon>Eukaryota</taxon>
        <taxon>Viridiplantae</taxon>
        <taxon>Chlorophyta</taxon>
        <taxon>Mamiellophyceae</taxon>
        <taxon>Mamiellales</taxon>
        <taxon>Bathycoccaceae</taxon>
        <taxon>Ostreococcus</taxon>
    </lineage>
</organism>
<dbReference type="EC" id="6.1.1.7" evidence="1"/>
<dbReference type="EMBL" id="CAID01000007">
    <property type="protein sequence ID" value="CEF98677.1"/>
    <property type="molecule type" value="Genomic_DNA"/>
</dbReference>
<dbReference type="SMR" id="Q015G2"/>
<dbReference type="FunCoup" id="Q015G2">
    <property type="interactions" value="623"/>
</dbReference>
<dbReference type="STRING" id="70448.Q015G2"/>
<dbReference type="eggNOG" id="KOG0188">
    <property type="taxonomic scope" value="Eukaryota"/>
</dbReference>
<dbReference type="InParanoid" id="Q015G2"/>
<dbReference type="OrthoDB" id="2423964at2759"/>
<dbReference type="Proteomes" id="UP000009170">
    <property type="component" value="Chromosome 7"/>
</dbReference>
<dbReference type="GO" id="GO:0009507">
    <property type="term" value="C:chloroplast"/>
    <property type="evidence" value="ECO:0007669"/>
    <property type="project" value="UniProtKB-SubCell"/>
</dbReference>
<dbReference type="GO" id="GO:0005829">
    <property type="term" value="C:cytosol"/>
    <property type="evidence" value="ECO:0007669"/>
    <property type="project" value="TreeGrafter"/>
</dbReference>
<dbReference type="GO" id="GO:0005739">
    <property type="term" value="C:mitochondrion"/>
    <property type="evidence" value="ECO:0007669"/>
    <property type="project" value="UniProtKB-SubCell"/>
</dbReference>
<dbReference type="GO" id="GO:0004813">
    <property type="term" value="F:alanine-tRNA ligase activity"/>
    <property type="evidence" value="ECO:0007669"/>
    <property type="project" value="UniProtKB-UniRule"/>
</dbReference>
<dbReference type="GO" id="GO:0002161">
    <property type="term" value="F:aminoacyl-tRNA deacylase activity"/>
    <property type="evidence" value="ECO:0007669"/>
    <property type="project" value="TreeGrafter"/>
</dbReference>
<dbReference type="GO" id="GO:0005524">
    <property type="term" value="F:ATP binding"/>
    <property type="evidence" value="ECO:0007669"/>
    <property type="project" value="UniProtKB-UniRule"/>
</dbReference>
<dbReference type="GO" id="GO:0000049">
    <property type="term" value="F:tRNA binding"/>
    <property type="evidence" value="ECO:0007669"/>
    <property type="project" value="UniProtKB-KW"/>
</dbReference>
<dbReference type="GO" id="GO:0008270">
    <property type="term" value="F:zinc ion binding"/>
    <property type="evidence" value="ECO:0007669"/>
    <property type="project" value="UniProtKB-UniRule"/>
</dbReference>
<dbReference type="GO" id="GO:0006419">
    <property type="term" value="P:alanyl-tRNA aminoacylation"/>
    <property type="evidence" value="ECO:0007669"/>
    <property type="project" value="UniProtKB-UniRule"/>
</dbReference>
<dbReference type="CDD" id="cd00673">
    <property type="entry name" value="AlaRS_core"/>
    <property type="match status" value="1"/>
</dbReference>
<dbReference type="FunFam" id="3.10.310.40:FF:000001">
    <property type="entry name" value="Alanine--tRNA ligase"/>
    <property type="match status" value="1"/>
</dbReference>
<dbReference type="FunFam" id="3.30.54.20:FF:000001">
    <property type="entry name" value="Alanine--tRNA ligase"/>
    <property type="match status" value="1"/>
</dbReference>
<dbReference type="FunFam" id="3.30.930.10:FF:000004">
    <property type="entry name" value="Alanine--tRNA ligase"/>
    <property type="match status" value="1"/>
</dbReference>
<dbReference type="FunFam" id="3.30.980.10:FF:000004">
    <property type="entry name" value="Alanine--tRNA ligase, cytoplasmic"/>
    <property type="match status" value="1"/>
</dbReference>
<dbReference type="Gene3D" id="2.40.30.130">
    <property type="match status" value="1"/>
</dbReference>
<dbReference type="Gene3D" id="3.10.310.40">
    <property type="match status" value="1"/>
</dbReference>
<dbReference type="Gene3D" id="3.30.54.20">
    <property type="match status" value="1"/>
</dbReference>
<dbReference type="Gene3D" id="6.10.250.550">
    <property type="match status" value="1"/>
</dbReference>
<dbReference type="Gene3D" id="3.30.930.10">
    <property type="entry name" value="Bira Bifunctional Protein, Domain 2"/>
    <property type="match status" value="1"/>
</dbReference>
<dbReference type="Gene3D" id="3.30.980.10">
    <property type="entry name" value="Threonyl-trna Synthetase, Chain A, domain 2"/>
    <property type="match status" value="1"/>
</dbReference>
<dbReference type="HAMAP" id="MF_00036_B">
    <property type="entry name" value="Ala_tRNA_synth_B"/>
    <property type="match status" value="1"/>
</dbReference>
<dbReference type="HAMAP" id="MF_03134">
    <property type="entry name" value="Ala_tRNA_synth_plantC"/>
    <property type="match status" value="1"/>
</dbReference>
<dbReference type="InterPro" id="IPR045864">
    <property type="entry name" value="aa-tRNA-synth_II/BPL/LPL"/>
</dbReference>
<dbReference type="InterPro" id="IPR002318">
    <property type="entry name" value="Ala-tRNA-lgiase_IIc"/>
</dbReference>
<dbReference type="InterPro" id="IPR018162">
    <property type="entry name" value="Ala-tRNA-ligase_IIc_anticod-bd"/>
</dbReference>
<dbReference type="InterPro" id="IPR018165">
    <property type="entry name" value="Ala-tRNA-synth_IIc_core"/>
</dbReference>
<dbReference type="InterPro" id="IPR018164">
    <property type="entry name" value="Ala-tRNA-synth_IIc_N"/>
</dbReference>
<dbReference type="InterPro" id="IPR050058">
    <property type="entry name" value="Ala-tRNA_ligase"/>
</dbReference>
<dbReference type="InterPro" id="IPR023033">
    <property type="entry name" value="Ala_tRNA_ligase_euk/bac"/>
</dbReference>
<dbReference type="InterPro" id="IPR027522">
    <property type="entry name" value="Ala_tRNA_synth_plant"/>
</dbReference>
<dbReference type="InterPro" id="IPR003156">
    <property type="entry name" value="DHHA1_dom"/>
</dbReference>
<dbReference type="InterPro" id="IPR018163">
    <property type="entry name" value="Thr/Ala-tRNA-synth_IIc_edit"/>
</dbReference>
<dbReference type="InterPro" id="IPR009000">
    <property type="entry name" value="Transl_B-barrel_sf"/>
</dbReference>
<dbReference type="InterPro" id="IPR012947">
    <property type="entry name" value="tRNA_SAD"/>
</dbReference>
<dbReference type="NCBIfam" id="TIGR00344">
    <property type="entry name" value="alaS"/>
    <property type="match status" value="1"/>
</dbReference>
<dbReference type="PANTHER" id="PTHR11777:SF9">
    <property type="entry name" value="ALANINE--TRNA LIGASE, CYTOPLASMIC"/>
    <property type="match status" value="1"/>
</dbReference>
<dbReference type="PANTHER" id="PTHR11777">
    <property type="entry name" value="ALANYL-TRNA SYNTHETASE"/>
    <property type="match status" value="1"/>
</dbReference>
<dbReference type="Pfam" id="PF02272">
    <property type="entry name" value="DHHA1"/>
    <property type="match status" value="1"/>
</dbReference>
<dbReference type="Pfam" id="PF01411">
    <property type="entry name" value="tRNA-synt_2c"/>
    <property type="match status" value="1"/>
</dbReference>
<dbReference type="Pfam" id="PF07973">
    <property type="entry name" value="tRNA_SAD"/>
    <property type="match status" value="1"/>
</dbReference>
<dbReference type="PRINTS" id="PR00980">
    <property type="entry name" value="TRNASYNTHALA"/>
</dbReference>
<dbReference type="SMART" id="SM00863">
    <property type="entry name" value="tRNA_SAD"/>
    <property type="match status" value="1"/>
</dbReference>
<dbReference type="SUPFAM" id="SSF55681">
    <property type="entry name" value="Class II aaRS and biotin synthetases"/>
    <property type="match status" value="1"/>
</dbReference>
<dbReference type="SUPFAM" id="SSF101353">
    <property type="entry name" value="Putative anticodon-binding domain of alanyl-tRNA synthetase (AlaRS)"/>
    <property type="match status" value="1"/>
</dbReference>
<dbReference type="SUPFAM" id="SSF55186">
    <property type="entry name" value="ThrRS/AlaRS common domain"/>
    <property type="match status" value="1"/>
</dbReference>
<dbReference type="SUPFAM" id="SSF50447">
    <property type="entry name" value="Translation proteins"/>
    <property type="match status" value="1"/>
</dbReference>
<dbReference type="PROSITE" id="PS50860">
    <property type="entry name" value="AA_TRNA_LIGASE_II_ALA"/>
    <property type="match status" value="1"/>
</dbReference>
<proteinExistence type="inferred from homology"/>
<sequence>MPRPGFAHATAPALAHARARISPVARRRVVVMRTRVDGAAKSLVTQLRLALGSTASRASSIASARRRVRALGTATNDQSTGTRANPNAEGKDNSGRGIRRRFLEFYEARGHSRQPSASLVPEDPTVLLTIAGMLQFKPVFMGQREREMPRATTTQKCVRTNDIENVGVTARHHTFFEMLGNFSFGDYFKREACEWAWELATNEFGLNPERVWVSVFREDDEAFAIWRDVVGVPESRIKRMDEKDNFWAAGPTGPCGPCSELYYDFHPERGLDGADLDDDSRFIEFYNLVFMELNRDADGGIKPLKNKNIDTGMGLERMAQILQGVSNNYETDLIRPIIDKAASMAGLDYASCSATQKQQLKVIGDHTRAVTYMISDGVFASNIGRGYIVRRLLRRVVRNGRLLGIKPADGQSAFTPSIAEVAISMSEECDPQVVKNTARILAELEREELSFQKTLGRGEEMLAELIEKAKDSKSGLSGKDAFTLYDTYGFPLDITTDVASEAGIAVDLEGFEKAMAEQRSMSQAAHQTVDVTAGNALAQVADELGAMSEFIGYDNISSDVSNVLAIVSGGESVEEASGGARVDVVLDVTPFYAESGGQVGDNGFLHSADGAVLKVTDVQKAGGGRIIVHSATVVKGSIKKGSQVSANVDENARRRARNNHTATHLLQSALKKVLGDDVSQAGSLCGFDRLRFDFNCPKAVTEAQLLEVETLVNGWISQSADLTAEEMPIAAAKEKGATMMFGEKYGDVVRVVDVPGISMELCGGTHVSNTAEIGGFKIISEAGIASGIRRIEAVAGAGVVELLQQRDAVVKQLASTLRVPPEEIASRVSGMQKDLVAAQKLAESLRGELAVAKANALVSEARAVGESKVLVARLDGVDPGALKVAAENLATQLGDGAAVILGSANGDNVGLVALFDTKVQKDGDLKAGQVLGAAAKRCGGGGGGKPGFAQAGGRDATQLDAALDEALQTLTTALDK</sequence>
<keyword id="KW-0030">Aminoacyl-tRNA synthetase</keyword>
<keyword id="KW-0067">ATP-binding</keyword>
<keyword id="KW-0150">Chloroplast</keyword>
<keyword id="KW-0436">Ligase</keyword>
<keyword id="KW-0479">Metal-binding</keyword>
<keyword id="KW-0496">Mitochondrion</keyword>
<keyword id="KW-0547">Nucleotide-binding</keyword>
<keyword id="KW-0934">Plastid</keyword>
<keyword id="KW-0648">Protein biosynthesis</keyword>
<keyword id="KW-1185">Reference proteome</keyword>
<keyword id="KW-0694">RNA-binding</keyword>
<keyword id="KW-0809">Transit peptide</keyword>
<keyword id="KW-0820">tRNA-binding</keyword>
<keyword id="KW-0862">Zinc</keyword>
<reference key="1">
    <citation type="journal article" date="2006" name="Proc. Natl. Acad. Sci. U.S.A.">
        <title>Genome analysis of the smallest free-living eukaryote Ostreococcus tauri unveils many unique features.</title>
        <authorList>
            <person name="Derelle E."/>
            <person name="Ferraz C."/>
            <person name="Rombauts S."/>
            <person name="Rouze P."/>
            <person name="Worden A.Z."/>
            <person name="Robbens S."/>
            <person name="Partensky F."/>
            <person name="Degroeve S."/>
            <person name="Echeynie S."/>
            <person name="Cooke R."/>
            <person name="Saeys Y."/>
            <person name="Wuyts J."/>
            <person name="Jabbari K."/>
            <person name="Bowler C."/>
            <person name="Panaud O."/>
            <person name="Piegu B."/>
            <person name="Ball S.G."/>
            <person name="Ral J.-P."/>
            <person name="Bouget F.-Y."/>
            <person name="Piganeau G."/>
            <person name="De Baets B."/>
            <person name="Picard A."/>
            <person name="Delseny M."/>
            <person name="Demaille J."/>
            <person name="Van de Peer Y."/>
            <person name="Moreau H."/>
        </authorList>
    </citation>
    <scope>NUCLEOTIDE SEQUENCE [LARGE SCALE GENOMIC DNA]</scope>
    <source>
        <strain>OTTH0595</strain>
    </source>
</reference>
<gene>
    <name evidence="3" type="ordered locus">Ot07g01880</name>
</gene>
<accession>Q015G2</accession>
<accession>A0A090M7L5</accession>
<evidence type="ECO:0000255" key="1">
    <source>
        <dbReference type="HAMAP-Rule" id="MF_03134"/>
    </source>
</evidence>
<evidence type="ECO:0000256" key="2">
    <source>
        <dbReference type="SAM" id="MobiDB-lite"/>
    </source>
</evidence>
<evidence type="ECO:0000312" key="3">
    <source>
        <dbReference type="EMBL" id="CEF98677.1"/>
    </source>
</evidence>
<feature type="transit peptide" description="Chloroplast and mitochondrion">
    <location>
        <begin position="1"/>
        <end position="54"/>
    </location>
</feature>
<feature type="chain" id="PRO_0000402308" description="Probable alanine--tRNA ligase, chloroplastic/mitochondrial" evidence="1">
    <location>
        <begin position="55"/>
        <end position="976"/>
    </location>
</feature>
<feature type="region of interest" description="Disordered" evidence="2">
    <location>
        <begin position="71"/>
        <end position="95"/>
    </location>
</feature>
<feature type="compositionally biased region" description="Polar residues" evidence="2">
    <location>
        <begin position="73"/>
        <end position="85"/>
    </location>
</feature>
<name>SYAP_OSTTA</name>